<protein>
    <recommendedName>
        <fullName evidence="5">LIM domain-containing protein PLIM2b</fullName>
    </recommendedName>
    <alternativeName>
        <fullName evidence="5">Pollen-expressed LIM protein 2b</fullName>
        <shortName evidence="4">OsPLIM2b</shortName>
    </alternativeName>
</protein>
<dbReference type="EMBL" id="AL663006">
    <property type="protein sequence ID" value="CAE04568.1"/>
    <property type="molecule type" value="Genomic_DNA"/>
</dbReference>
<dbReference type="EMBL" id="AL662984">
    <property type="protein sequence ID" value="CAE54551.1"/>
    <property type="molecule type" value="Genomic_DNA"/>
</dbReference>
<dbReference type="EMBL" id="AP008210">
    <property type="protein sequence ID" value="BAF15319.1"/>
    <property type="molecule type" value="Genomic_DNA"/>
</dbReference>
<dbReference type="EMBL" id="AP014960">
    <property type="protein sequence ID" value="BAS90226.1"/>
    <property type="molecule type" value="Genomic_DNA"/>
</dbReference>
<dbReference type="EMBL" id="CM000141">
    <property type="protein sequence ID" value="EAZ31441.1"/>
    <property type="molecule type" value="Genomic_DNA"/>
</dbReference>
<dbReference type="EMBL" id="AK069907">
    <property type="protein sequence ID" value="BAG91667.1"/>
    <property type="molecule type" value="mRNA"/>
</dbReference>
<dbReference type="RefSeq" id="XP_015635606.1">
    <property type="nucleotide sequence ID" value="XM_015780120.1"/>
</dbReference>
<dbReference type="FunCoup" id="Q7F9R9">
    <property type="interactions" value="614"/>
</dbReference>
<dbReference type="STRING" id="39947.Q7F9R9"/>
<dbReference type="PaxDb" id="39947-Q7F9R9"/>
<dbReference type="EnsemblPlants" id="Os04t0532500-01">
    <property type="protein sequence ID" value="Os04t0532500-01"/>
    <property type="gene ID" value="Os04g0532500"/>
</dbReference>
<dbReference type="Gramene" id="Os04t0532500-01">
    <property type="protein sequence ID" value="Os04t0532500-01"/>
    <property type="gene ID" value="Os04g0532500"/>
</dbReference>
<dbReference type="KEGG" id="dosa:Os04g0532500"/>
<dbReference type="KEGG" id="osa:4336498"/>
<dbReference type="eggNOG" id="KOG1700">
    <property type="taxonomic scope" value="Eukaryota"/>
</dbReference>
<dbReference type="HOGENOM" id="CLU_026811_1_0_1"/>
<dbReference type="InParanoid" id="Q7F9R9"/>
<dbReference type="OMA" id="NMATHEY"/>
<dbReference type="OrthoDB" id="6129702at2759"/>
<dbReference type="Proteomes" id="UP000000763">
    <property type="component" value="Chromosome 4"/>
</dbReference>
<dbReference type="Proteomes" id="UP000007752">
    <property type="component" value="Chromosome 4"/>
</dbReference>
<dbReference type="Proteomes" id="UP000059680">
    <property type="component" value="Chromosome 4"/>
</dbReference>
<dbReference type="GO" id="GO:0015629">
    <property type="term" value="C:actin cytoskeleton"/>
    <property type="evidence" value="ECO:0000318"/>
    <property type="project" value="GO_Central"/>
</dbReference>
<dbReference type="GO" id="GO:0005886">
    <property type="term" value="C:plasma membrane"/>
    <property type="evidence" value="ECO:0000318"/>
    <property type="project" value="GO_Central"/>
</dbReference>
<dbReference type="GO" id="GO:0051015">
    <property type="term" value="F:actin filament binding"/>
    <property type="evidence" value="ECO:0000318"/>
    <property type="project" value="GO_Central"/>
</dbReference>
<dbReference type="GO" id="GO:0046872">
    <property type="term" value="F:metal ion binding"/>
    <property type="evidence" value="ECO:0007669"/>
    <property type="project" value="UniProtKB-KW"/>
</dbReference>
<dbReference type="GO" id="GO:0051017">
    <property type="term" value="P:actin filament bundle assembly"/>
    <property type="evidence" value="ECO:0000318"/>
    <property type="project" value="GO_Central"/>
</dbReference>
<dbReference type="CDD" id="cd09440">
    <property type="entry name" value="LIM1_SF3"/>
    <property type="match status" value="1"/>
</dbReference>
<dbReference type="FunFam" id="2.10.110.10:FF:000002">
    <property type="entry name" value="LIM domain and actin-binding 1"/>
    <property type="match status" value="2"/>
</dbReference>
<dbReference type="Gene3D" id="2.10.110.10">
    <property type="entry name" value="Cysteine Rich Protein"/>
    <property type="match status" value="2"/>
</dbReference>
<dbReference type="InterPro" id="IPR001781">
    <property type="entry name" value="Znf_LIM"/>
</dbReference>
<dbReference type="PANTHER" id="PTHR24206">
    <property type="entry name" value="OS06G0237300 PROTEIN"/>
    <property type="match status" value="1"/>
</dbReference>
<dbReference type="Pfam" id="PF00412">
    <property type="entry name" value="LIM"/>
    <property type="match status" value="2"/>
</dbReference>
<dbReference type="SMART" id="SM00132">
    <property type="entry name" value="LIM"/>
    <property type="match status" value="2"/>
</dbReference>
<dbReference type="SUPFAM" id="SSF57716">
    <property type="entry name" value="Glucocorticoid receptor-like (DNA-binding domain)"/>
    <property type="match status" value="4"/>
</dbReference>
<dbReference type="PROSITE" id="PS00478">
    <property type="entry name" value="LIM_DOMAIN_1"/>
    <property type="match status" value="1"/>
</dbReference>
<dbReference type="PROSITE" id="PS50023">
    <property type="entry name" value="LIM_DOMAIN_2"/>
    <property type="match status" value="2"/>
</dbReference>
<feature type="chain" id="PRO_0000442186" description="LIM domain-containing protein PLIM2b">
    <location>
        <begin position="1"/>
        <end position="201"/>
    </location>
</feature>
<feature type="domain" description="LIM zinc-binding 1" evidence="1">
    <location>
        <begin position="8"/>
        <end position="68"/>
    </location>
</feature>
<feature type="domain" description="LIM zinc-binding 2" evidence="1">
    <location>
        <begin position="103"/>
        <end position="163"/>
    </location>
</feature>
<feature type="region of interest" description="Disordered" evidence="2">
    <location>
        <begin position="171"/>
        <end position="201"/>
    </location>
</feature>
<feature type="compositionally biased region" description="Low complexity" evidence="2">
    <location>
        <begin position="177"/>
        <end position="187"/>
    </location>
</feature>
<sequence>MSFTGTQDKCTACDKTVHFIDLLTADGVPYHKTCFKCSHCKGILSMCSYSSMDGVLYCKTHFEQLFKETGSFSKKFAPGCRSTDKELARAPSKICSAFSGTQDKCAACQKTVYPLEKLTLEGESYHKSCFKCSHGGCILTTSSYAALNGVLYCKIHFGQLFMEKGSYNHMKKKSESQEVLPEVVPEEQPAPPPPDENREDN</sequence>
<comment type="subunit">
    <text evidence="3">Interacts with NEK3.</text>
</comment>
<comment type="developmental stage">
    <text evidence="3">Expressed in anthers from the bi-cellular to the tri-cellular pollen stage.</text>
</comment>
<proteinExistence type="evidence at protein level"/>
<reference key="1">
    <citation type="journal article" date="2002" name="Nature">
        <title>Sequence and analysis of rice chromosome 4.</title>
        <authorList>
            <person name="Feng Q."/>
            <person name="Zhang Y."/>
            <person name="Hao P."/>
            <person name="Wang S."/>
            <person name="Fu G."/>
            <person name="Huang Y."/>
            <person name="Li Y."/>
            <person name="Zhu J."/>
            <person name="Liu Y."/>
            <person name="Hu X."/>
            <person name="Jia P."/>
            <person name="Zhang Y."/>
            <person name="Zhao Q."/>
            <person name="Ying K."/>
            <person name="Yu S."/>
            <person name="Tang Y."/>
            <person name="Weng Q."/>
            <person name="Zhang L."/>
            <person name="Lu Y."/>
            <person name="Mu J."/>
            <person name="Lu Y."/>
            <person name="Zhang L.S."/>
            <person name="Yu Z."/>
            <person name="Fan D."/>
            <person name="Liu X."/>
            <person name="Lu T."/>
            <person name="Li C."/>
            <person name="Wu Y."/>
            <person name="Sun T."/>
            <person name="Lei H."/>
            <person name="Li T."/>
            <person name="Hu H."/>
            <person name="Guan J."/>
            <person name="Wu M."/>
            <person name="Zhang R."/>
            <person name="Zhou B."/>
            <person name="Chen Z."/>
            <person name="Chen L."/>
            <person name="Jin Z."/>
            <person name="Wang R."/>
            <person name="Yin H."/>
            <person name="Cai Z."/>
            <person name="Ren S."/>
            <person name="Lv G."/>
            <person name="Gu W."/>
            <person name="Zhu G."/>
            <person name="Tu Y."/>
            <person name="Jia J."/>
            <person name="Zhang Y."/>
            <person name="Chen J."/>
            <person name="Kang H."/>
            <person name="Chen X."/>
            <person name="Shao C."/>
            <person name="Sun Y."/>
            <person name="Hu Q."/>
            <person name="Zhang X."/>
            <person name="Zhang W."/>
            <person name="Wang L."/>
            <person name="Ding C."/>
            <person name="Sheng H."/>
            <person name="Gu J."/>
            <person name="Chen S."/>
            <person name="Ni L."/>
            <person name="Zhu F."/>
            <person name="Chen W."/>
            <person name="Lan L."/>
            <person name="Lai Y."/>
            <person name="Cheng Z."/>
            <person name="Gu M."/>
            <person name="Jiang J."/>
            <person name="Li J."/>
            <person name="Hong G."/>
            <person name="Xue Y."/>
            <person name="Han B."/>
        </authorList>
    </citation>
    <scope>NUCLEOTIDE SEQUENCE [LARGE SCALE GENOMIC DNA]</scope>
    <source>
        <strain>cv. Nipponbare</strain>
    </source>
</reference>
<reference key="2">
    <citation type="journal article" date="2005" name="Nature">
        <title>The map-based sequence of the rice genome.</title>
        <authorList>
            <consortium name="International rice genome sequencing project (IRGSP)"/>
        </authorList>
    </citation>
    <scope>NUCLEOTIDE SEQUENCE [LARGE SCALE GENOMIC DNA]</scope>
    <source>
        <strain>cv. Nipponbare</strain>
    </source>
</reference>
<reference key="3">
    <citation type="journal article" date="2008" name="Nucleic Acids Res.">
        <title>The rice annotation project database (RAP-DB): 2008 update.</title>
        <authorList>
            <consortium name="The rice annotation project (RAP)"/>
        </authorList>
    </citation>
    <scope>GENOME REANNOTATION</scope>
    <source>
        <strain>cv. Nipponbare</strain>
    </source>
</reference>
<reference key="4">
    <citation type="journal article" date="2013" name="Rice">
        <title>Improvement of the Oryza sativa Nipponbare reference genome using next generation sequence and optical map data.</title>
        <authorList>
            <person name="Kawahara Y."/>
            <person name="de la Bastide M."/>
            <person name="Hamilton J.P."/>
            <person name="Kanamori H."/>
            <person name="McCombie W.R."/>
            <person name="Ouyang S."/>
            <person name="Schwartz D.C."/>
            <person name="Tanaka T."/>
            <person name="Wu J."/>
            <person name="Zhou S."/>
            <person name="Childs K.L."/>
            <person name="Davidson R.M."/>
            <person name="Lin H."/>
            <person name="Quesada-Ocampo L."/>
            <person name="Vaillancourt B."/>
            <person name="Sakai H."/>
            <person name="Lee S.S."/>
            <person name="Kim J."/>
            <person name="Numa H."/>
            <person name="Itoh T."/>
            <person name="Buell C.R."/>
            <person name="Matsumoto T."/>
        </authorList>
    </citation>
    <scope>GENOME REANNOTATION</scope>
    <source>
        <strain>cv. Nipponbare</strain>
    </source>
</reference>
<reference key="5">
    <citation type="journal article" date="2005" name="PLoS Biol.">
        <title>The genomes of Oryza sativa: a history of duplications.</title>
        <authorList>
            <person name="Yu J."/>
            <person name="Wang J."/>
            <person name="Lin W."/>
            <person name="Li S."/>
            <person name="Li H."/>
            <person name="Zhou J."/>
            <person name="Ni P."/>
            <person name="Dong W."/>
            <person name="Hu S."/>
            <person name="Zeng C."/>
            <person name="Zhang J."/>
            <person name="Zhang Y."/>
            <person name="Li R."/>
            <person name="Xu Z."/>
            <person name="Li S."/>
            <person name="Li X."/>
            <person name="Zheng H."/>
            <person name="Cong L."/>
            <person name="Lin L."/>
            <person name="Yin J."/>
            <person name="Geng J."/>
            <person name="Li G."/>
            <person name="Shi J."/>
            <person name="Liu J."/>
            <person name="Lv H."/>
            <person name="Li J."/>
            <person name="Wang J."/>
            <person name="Deng Y."/>
            <person name="Ran L."/>
            <person name="Shi X."/>
            <person name="Wang X."/>
            <person name="Wu Q."/>
            <person name="Li C."/>
            <person name="Ren X."/>
            <person name="Wang J."/>
            <person name="Wang X."/>
            <person name="Li D."/>
            <person name="Liu D."/>
            <person name="Zhang X."/>
            <person name="Ji Z."/>
            <person name="Zhao W."/>
            <person name="Sun Y."/>
            <person name="Zhang Z."/>
            <person name="Bao J."/>
            <person name="Han Y."/>
            <person name="Dong L."/>
            <person name="Ji J."/>
            <person name="Chen P."/>
            <person name="Wu S."/>
            <person name="Liu J."/>
            <person name="Xiao Y."/>
            <person name="Bu D."/>
            <person name="Tan J."/>
            <person name="Yang L."/>
            <person name="Ye C."/>
            <person name="Zhang J."/>
            <person name="Xu J."/>
            <person name="Zhou Y."/>
            <person name="Yu Y."/>
            <person name="Zhang B."/>
            <person name="Zhuang S."/>
            <person name="Wei H."/>
            <person name="Liu B."/>
            <person name="Lei M."/>
            <person name="Yu H."/>
            <person name="Li Y."/>
            <person name="Xu H."/>
            <person name="Wei S."/>
            <person name="He X."/>
            <person name="Fang L."/>
            <person name="Zhang Z."/>
            <person name="Zhang Y."/>
            <person name="Huang X."/>
            <person name="Su Z."/>
            <person name="Tong W."/>
            <person name="Li J."/>
            <person name="Tong Z."/>
            <person name="Li S."/>
            <person name="Ye J."/>
            <person name="Wang L."/>
            <person name="Fang L."/>
            <person name="Lei T."/>
            <person name="Chen C.-S."/>
            <person name="Chen H.-C."/>
            <person name="Xu Z."/>
            <person name="Li H."/>
            <person name="Huang H."/>
            <person name="Zhang F."/>
            <person name="Xu H."/>
            <person name="Li N."/>
            <person name="Zhao C."/>
            <person name="Li S."/>
            <person name="Dong L."/>
            <person name="Huang Y."/>
            <person name="Li L."/>
            <person name="Xi Y."/>
            <person name="Qi Q."/>
            <person name="Li W."/>
            <person name="Zhang B."/>
            <person name="Hu W."/>
            <person name="Zhang Y."/>
            <person name="Tian X."/>
            <person name="Jiao Y."/>
            <person name="Liang X."/>
            <person name="Jin J."/>
            <person name="Gao L."/>
            <person name="Zheng W."/>
            <person name="Hao B."/>
            <person name="Liu S.-M."/>
            <person name="Wang W."/>
            <person name="Yuan L."/>
            <person name="Cao M."/>
            <person name="McDermott J."/>
            <person name="Samudrala R."/>
            <person name="Wang J."/>
            <person name="Wong G.K.-S."/>
            <person name="Yang H."/>
        </authorList>
    </citation>
    <scope>NUCLEOTIDE SEQUENCE [LARGE SCALE GENOMIC DNA]</scope>
    <source>
        <strain>cv. Nipponbare</strain>
    </source>
</reference>
<reference key="6">
    <citation type="journal article" date="2003" name="Science">
        <title>Collection, mapping, and annotation of over 28,000 cDNA clones from japonica rice.</title>
        <authorList>
            <consortium name="The rice full-length cDNA consortium"/>
        </authorList>
    </citation>
    <scope>NUCLEOTIDE SEQUENCE [LARGE SCALE MRNA]</scope>
    <source>
        <strain>cv. Nipponbare</strain>
    </source>
</reference>
<reference key="7">
    <citation type="journal article" date="2007" name="DNA Res.">
        <title>Genome-wide analysis of LIM gene family in Populus trichocarpa, Arabidopsis thaliana, and Oryza sativa.</title>
        <authorList>
            <person name="Arnaud D."/>
            <person name="Dejardin A."/>
            <person name="Leple J.C."/>
            <person name="Lesage-Descauses M.C."/>
            <person name="Pilate G."/>
        </authorList>
    </citation>
    <scope>GENE FAMILY</scope>
    <scope>NOMENCLATURE</scope>
</reference>
<reference key="8">
    <citation type="journal article" date="2009" name="Plant Cell Physiol.">
        <title>Cytoplasmic male sterility-related protein kinase, OsNek3, is regulated downstream of mitochondrial protein phosphatase 2C, DCW11.</title>
        <authorList>
            <person name="Fujii S."/>
            <person name="Yamada M."/>
            <person name="Toriyama K."/>
        </authorList>
    </citation>
    <scope>INTERACTION WITH NEK3</scope>
    <scope>DEVELOPMENTAL STAGE</scope>
</reference>
<organism>
    <name type="scientific">Oryza sativa subsp. japonica</name>
    <name type="common">Rice</name>
    <dbReference type="NCBI Taxonomy" id="39947"/>
    <lineage>
        <taxon>Eukaryota</taxon>
        <taxon>Viridiplantae</taxon>
        <taxon>Streptophyta</taxon>
        <taxon>Embryophyta</taxon>
        <taxon>Tracheophyta</taxon>
        <taxon>Spermatophyta</taxon>
        <taxon>Magnoliopsida</taxon>
        <taxon>Liliopsida</taxon>
        <taxon>Poales</taxon>
        <taxon>Poaceae</taxon>
        <taxon>BOP clade</taxon>
        <taxon>Oryzoideae</taxon>
        <taxon>Oryzeae</taxon>
        <taxon>Oryzinae</taxon>
        <taxon>Oryza</taxon>
        <taxon>Oryza sativa</taxon>
    </lineage>
</organism>
<gene>
    <name evidence="4" type="primary">PLIM2B</name>
    <name evidence="6" type="ordered locus">Os04g0532500</name>
    <name evidence="5" type="ordered locus">LOC_Os04g45010</name>
    <name evidence="9" type="ORF">OsJ_15578</name>
    <name evidence="8" type="ORF">OSJNBa0081C01.26</name>
    <name evidence="7" type="ORF">OSJNBb0039L24.7</name>
</gene>
<name>PLI2B_ORYSJ</name>
<evidence type="ECO:0000255" key="1">
    <source>
        <dbReference type="PROSITE-ProRule" id="PRU00125"/>
    </source>
</evidence>
<evidence type="ECO:0000256" key="2">
    <source>
        <dbReference type="SAM" id="MobiDB-lite"/>
    </source>
</evidence>
<evidence type="ECO:0000269" key="3">
    <source>
    </source>
</evidence>
<evidence type="ECO:0000303" key="4">
    <source>
    </source>
</evidence>
<evidence type="ECO:0000305" key="5"/>
<evidence type="ECO:0000312" key="6">
    <source>
        <dbReference type="EMBL" id="BAF15319.1"/>
    </source>
</evidence>
<evidence type="ECO:0000312" key="7">
    <source>
        <dbReference type="EMBL" id="CAE04568.1"/>
    </source>
</evidence>
<evidence type="ECO:0000312" key="8">
    <source>
        <dbReference type="EMBL" id="CAE54551.1"/>
    </source>
</evidence>
<evidence type="ECO:0000312" key="9">
    <source>
        <dbReference type="EMBL" id="EAZ31441.1"/>
    </source>
</evidence>
<keyword id="KW-0440">LIM domain</keyword>
<keyword id="KW-0479">Metal-binding</keyword>
<keyword id="KW-1185">Reference proteome</keyword>
<keyword id="KW-0677">Repeat</keyword>
<keyword id="KW-0862">Zinc</keyword>
<accession>Q7F9R9</accession>